<name>GMHA_ECOL5</name>
<evidence type="ECO:0000255" key="1">
    <source>
        <dbReference type="HAMAP-Rule" id="MF_00067"/>
    </source>
</evidence>
<proteinExistence type="inferred from homology"/>
<reference key="1">
    <citation type="journal article" date="2006" name="Mol. Microbiol.">
        <title>Role of pathogenicity island-associated integrases in the genome plasticity of uropathogenic Escherichia coli strain 536.</title>
        <authorList>
            <person name="Hochhut B."/>
            <person name="Wilde C."/>
            <person name="Balling G."/>
            <person name="Middendorf B."/>
            <person name="Dobrindt U."/>
            <person name="Brzuszkiewicz E."/>
            <person name="Gottschalk G."/>
            <person name="Carniel E."/>
            <person name="Hacker J."/>
        </authorList>
    </citation>
    <scope>NUCLEOTIDE SEQUENCE [LARGE SCALE GENOMIC DNA]</scope>
    <source>
        <strain>536 / UPEC</strain>
    </source>
</reference>
<comment type="function">
    <text evidence="1">Catalyzes the isomerization of sedoheptulose 7-phosphate in D-glycero-D-manno-heptose 7-phosphate.</text>
</comment>
<comment type="catalytic activity">
    <reaction evidence="1">
        <text>2 D-sedoheptulose 7-phosphate = D-glycero-alpha-D-manno-heptose 7-phosphate + D-glycero-beta-D-manno-heptose 7-phosphate</text>
        <dbReference type="Rhea" id="RHEA:27489"/>
        <dbReference type="ChEBI" id="CHEBI:57483"/>
        <dbReference type="ChEBI" id="CHEBI:60203"/>
        <dbReference type="ChEBI" id="CHEBI:60204"/>
        <dbReference type="EC" id="5.3.1.28"/>
    </reaction>
</comment>
<comment type="cofactor">
    <cofactor evidence="1">
        <name>Zn(2+)</name>
        <dbReference type="ChEBI" id="CHEBI:29105"/>
    </cofactor>
    <text evidence="1">Binds 1 zinc ion per subunit.</text>
</comment>
<comment type="pathway">
    <text evidence="1">Carbohydrate biosynthesis; D-glycero-D-manno-heptose 7-phosphate biosynthesis; D-glycero-alpha-D-manno-heptose 7-phosphate and D-glycero-beta-D-manno-heptose 7-phosphate from sedoheptulose 7-phosphate: step 1/1.</text>
</comment>
<comment type="subunit">
    <text evidence="1">Homotetramer.</text>
</comment>
<comment type="subcellular location">
    <subcellularLocation>
        <location evidence="1">Cytoplasm</location>
    </subcellularLocation>
</comment>
<comment type="miscellaneous">
    <text evidence="1">The reaction produces a racemic mixture of D-glycero-alpha-D-manno-heptose 7-phosphate and D-glycero-beta-D-manno-heptose 7-phosphate.</text>
</comment>
<comment type="similarity">
    <text evidence="1">Belongs to the SIS family. GmhA subfamily.</text>
</comment>
<organism>
    <name type="scientific">Escherichia coli O6:K15:H31 (strain 536 / UPEC)</name>
    <dbReference type="NCBI Taxonomy" id="362663"/>
    <lineage>
        <taxon>Bacteria</taxon>
        <taxon>Pseudomonadati</taxon>
        <taxon>Pseudomonadota</taxon>
        <taxon>Gammaproteobacteria</taxon>
        <taxon>Enterobacterales</taxon>
        <taxon>Enterobacteriaceae</taxon>
        <taxon>Escherichia</taxon>
    </lineage>
</organism>
<feature type="chain" id="PRO_1000009063" description="Phosphoheptose isomerase">
    <location>
        <begin position="1"/>
        <end position="192"/>
    </location>
</feature>
<feature type="domain" description="SIS" evidence="1">
    <location>
        <begin position="37"/>
        <end position="192"/>
    </location>
</feature>
<feature type="binding site" evidence="1">
    <location>
        <begin position="52"/>
        <end position="54"/>
    </location>
    <ligand>
        <name>substrate</name>
    </ligand>
</feature>
<feature type="binding site" evidence="1">
    <location>
        <position position="61"/>
    </location>
    <ligand>
        <name>Zn(2+)</name>
        <dbReference type="ChEBI" id="CHEBI:29105"/>
    </ligand>
</feature>
<feature type="binding site" evidence="1">
    <location>
        <position position="65"/>
    </location>
    <ligand>
        <name>substrate</name>
    </ligand>
</feature>
<feature type="binding site" evidence="1">
    <location>
        <position position="65"/>
    </location>
    <ligand>
        <name>Zn(2+)</name>
        <dbReference type="ChEBI" id="CHEBI:29105"/>
    </ligand>
</feature>
<feature type="binding site" evidence="1">
    <location>
        <begin position="93"/>
        <end position="94"/>
    </location>
    <ligand>
        <name>substrate</name>
    </ligand>
</feature>
<feature type="binding site" evidence="1">
    <location>
        <begin position="119"/>
        <end position="121"/>
    </location>
    <ligand>
        <name>substrate</name>
    </ligand>
</feature>
<feature type="binding site" evidence="1">
    <location>
        <position position="124"/>
    </location>
    <ligand>
        <name>substrate</name>
    </ligand>
</feature>
<feature type="binding site" evidence="1">
    <location>
        <position position="172"/>
    </location>
    <ligand>
        <name>substrate</name>
    </ligand>
</feature>
<feature type="binding site" evidence="1">
    <location>
        <position position="172"/>
    </location>
    <ligand>
        <name>Zn(2+)</name>
        <dbReference type="ChEBI" id="CHEBI:29105"/>
    </ligand>
</feature>
<feature type="binding site" evidence="1">
    <location>
        <position position="180"/>
    </location>
    <ligand>
        <name>Zn(2+)</name>
        <dbReference type="ChEBI" id="CHEBI:29105"/>
    </ligand>
</feature>
<sequence>MYQDLIRNELNEAAETLANFLKDDANIHAIQRAAVLLADSFKAGGKVLSCGNGGSHCDAMHFAEELTGRYRENRPGYPAIAISDVSHISCVGNDFGFNDIFSRYVEAVGREGDVLLGISTSGNSANVIKAIAAAREKGMKVITLTGKDGGKMAGTADIEIRVPHFGYADRIQEIHIKVIHILIQLIEKEMVK</sequence>
<accession>Q0TL93</accession>
<protein>
    <recommendedName>
        <fullName evidence="1">Phosphoheptose isomerase</fullName>
        <ecNumber evidence="1">5.3.1.28</ecNumber>
    </recommendedName>
    <alternativeName>
        <fullName evidence="1">Sedoheptulose 7-phosphate isomerase</fullName>
    </alternativeName>
</protein>
<keyword id="KW-0119">Carbohydrate metabolism</keyword>
<keyword id="KW-0963">Cytoplasm</keyword>
<keyword id="KW-0413">Isomerase</keyword>
<keyword id="KW-0479">Metal-binding</keyword>
<keyword id="KW-0862">Zinc</keyword>
<gene>
    <name evidence="1" type="primary">gmhA</name>
    <name type="ordered locus">ECP_0252</name>
</gene>
<dbReference type="EC" id="5.3.1.28" evidence="1"/>
<dbReference type="EMBL" id="CP000247">
    <property type="protein sequence ID" value="ABG68288.1"/>
    <property type="molecule type" value="Genomic_DNA"/>
</dbReference>
<dbReference type="SMR" id="Q0TL93"/>
<dbReference type="KEGG" id="ecp:ECP_0252"/>
<dbReference type="HOGENOM" id="CLU_080999_4_0_6"/>
<dbReference type="UniPathway" id="UPA00041">
    <property type="reaction ID" value="UER00436"/>
</dbReference>
<dbReference type="Proteomes" id="UP000009182">
    <property type="component" value="Chromosome"/>
</dbReference>
<dbReference type="GO" id="GO:0005737">
    <property type="term" value="C:cytoplasm"/>
    <property type="evidence" value="ECO:0007669"/>
    <property type="project" value="UniProtKB-SubCell"/>
</dbReference>
<dbReference type="GO" id="GO:0097367">
    <property type="term" value="F:carbohydrate derivative binding"/>
    <property type="evidence" value="ECO:0007669"/>
    <property type="project" value="InterPro"/>
</dbReference>
<dbReference type="GO" id="GO:0008968">
    <property type="term" value="F:D-sedoheptulose 7-phosphate isomerase activity"/>
    <property type="evidence" value="ECO:0007669"/>
    <property type="project" value="UniProtKB-UniRule"/>
</dbReference>
<dbReference type="GO" id="GO:0008270">
    <property type="term" value="F:zinc ion binding"/>
    <property type="evidence" value="ECO:0007669"/>
    <property type="project" value="UniProtKB-UniRule"/>
</dbReference>
<dbReference type="GO" id="GO:0005975">
    <property type="term" value="P:carbohydrate metabolic process"/>
    <property type="evidence" value="ECO:0007669"/>
    <property type="project" value="UniProtKB-UniRule"/>
</dbReference>
<dbReference type="GO" id="GO:2001061">
    <property type="term" value="P:D-glycero-D-manno-heptose 7-phosphate biosynthetic process"/>
    <property type="evidence" value="ECO:0007669"/>
    <property type="project" value="UniProtKB-UniPathway"/>
</dbReference>
<dbReference type="CDD" id="cd05006">
    <property type="entry name" value="SIS_GmhA"/>
    <property type="match status" value="1"/>
</dbReference>
<dbReference type="FunFam" id="3.40.50.10490:FF:000013">
    <property type="entry name" value="Phosphoheptose isomerase"/>
    <property type="match status" value="1"/>
</dbReference>
<dbReference type="Gene3D" id="3.40.50.10490">
    <property type="entry name" value="Glucose-6-phosphate isomerase like protein, domain 1"/>
    <property type="match status" value="1"/>
</dbReference>
<dbReference type="HAMAP" id="MF_00067">
    <property type="entry name" value="GmhA"/>
    <property type="match status" value="1"/>
</dbReference>
<dbReference type="InterPro" id="IPR035461">
    <property type="entry name" value="GmhA/DiaA"/>
</dbReference>
<dbReference type="InterPro" id="IPR004515">
    <property type="entry name" value="Phosphoheptose_Isoase"/>
</dbReference>
<dbReference type="InterPro" id="IPR001347">
    <property type="entry name" value="SIS_dom"/>
</dbReference>
<dbReference type="InterPro" id="IPR046348">
    <property type="entry name" value="SIS_dom_sf"/>
</dbReference>
<dbReference type="InterPro" id="IPR050099">
    <property type="entry name" value="SIS_GmhA/DiaA_subfam"/>
</dbReference>
<dbReference type="NCBIfam" id="TIGR00441">
    <property type="entry name" value="gmhA"/>
    <property type="match status" value="1"/>
</dbReference>
<dbReference type="NCBIfam" id="NF001628">
    <property type="entry name" value="PRK00414.1"/>
    <property type="match status" value="1"/>
</dbReference>
<dbReference type="PANTHER" id="PTHR30390:SF7">
    <property type="entry name" value="PHOSPHOHEPTOSE ISOMERASE"/>
    <property type="match status" value="1"/>
</dbReference>
<dbReference type="PANTHER" id="PTHR30390">
    <property type="entry name" value="SEDOHEPTULOSE 7-PHOSPHATE ISOMERASE / DNAA INITIATOR-ASSOCIATING FACTOR FOR REPLICATION INITIATION"/>
    <property type="match status" value="1"/>
</dbReference>
<dbReference type="Pfam" id="PF13580">
    <property type="entry name" value="SIS_2"/>
    <property type="match status" value="1"/>
</dbReference>
<dbReference type="SUPFAM" id="SSF53697">
    <property type="entry name" value="SIS domain"/>
    <property type="match status" value="1"/>
</dbReference>
<dbReference type="PROSITE" id="PS51464">
    <property type="entry name" value="SIS"/>
    <property type="match status" value="1"/>
</dbReference>